<gene>
    <name evidence="1" type="primary">betB</name>
    <name type="ordered locus">Bcenmc03_5183</name>
</gene>
<feature type="chain" id="PRO_1000133941" description="Betaine aldehyde dehydrogenase">
    <location>
        <begin position="1"/>
        <end position="489"/>
    </location>
</feature>
<feature type="active site" description="Charge relay system" evidence="1">
    <location>
        <position position="162"/>
    </location>
</feature>
<feature type="active site" description="Proton acceptor" evidence="1">
    <location>
        <position position="251"/>
    </location>
</feature>
<feature type="active site" description="Nucleophile" evidence="1">
    <location>
        <position position="285"/>
    </location>
</feature>
<feature type="active site" description="Charge relay system" evidence="1">
    <location>
        <position position="463"/>
    </location>
</feature>
<feature type="binding site" evidence="1">
    <location>
        <position position="26"/>
    </location>
    <ligand>
        <name>K(+)</name>
        <dbReference type="ChEBI" id="CHEBI:29103"/>
        <label>1</label>
    </ligand>
</feature>
<feature type="binding site" evidence="1">
    <location>
        <position position="93"/>
    </location>
    <ligand>
        <name>K(+)</name>
        <dbReference type="ChEBI" id="CHEBI:29103"/>
        <label>1</label>
    </ligand>
</feature>
<feature type="binding site" evidence="1">
    <location>
        <begin position="150"/>
        <end position="152"/>
    </location>
    <ligand>
        <name>NAD(+)</name>
        <dbReference type="ChEBI" id="CHEBI:57540"/>
    </ligand>
</feature>
<feature type="binding site" evidence="1">
    <location>
        <begin position="176"/>
        <end position="179"/>
    </location>
    <ligand>
        <name>NAD(+)</name>
        <dbReference type="ChEBI" id="CHEBI:57540"/>
    </ligand>
</feature>
<feature type="binding site" evidence="1">
    <location>
        <position position="180"/>
    </location>
    <ligand>
        <name>K(+)</name>
        <dbReference type="ChEBI" id="CHEBI:29103"/>
        <label>1</label>
    </ligand>
</feature>
<feature type="binding site" evidence="1">
    <location>
        <begin position="229"/>
        <end position="232"/>
    </location>
    <ligand>
        <name>NAD(+)</name>
        <dbReference type="ChEBI" id="CHEBI:57540"/>
    </ligand>
</feature>
<feature type="binding site" evidence="1">
    <location>
        <position position="245"/>
    </location>
    <ligand>
        <name>K(+)</name>
        <dbReference type="ChEBI" id="CHEBI:29103"/>
        <label>2</label>
    </ligand>
</feature>
<feature type="binding site" evidence="1">
    <location>
        <position position="253"/>
    </location>
    <ligand>
        <name>NAD(+)</name>
        <dbReference type="ChEBI" id="CHEBI:57540"/>
    </ligand>
</feature>
<feature type="binding site" description="covalent" evidence="1">
    <location>
        <position position="285"/>
    </location>
    <ligand>
        <name>NAD(+)</name>
        <dbReference type="ChEBI" id="CHEBI:57540"/>
    </ligand>
</feature>
<feature type="binding site" evidence="1">
    <location>
        <position position="386"/>
    </location>
    <ligand>
        <name>NAD(+)</name>
        <dbReference type="ChEBI" id="CHEBI:57540"/>
    </ligand>
</feature>
<feature type="binding site" evidence="1">
    <location>
        <position position="456"/>
    </location>
    <ligand>
        <name>K(+)</name>
        <dbReference type="ChEBI" id="CHEBI:29103"/>
        <label>2</label>
    </ligand>
</feature>
<feature type="binding site" evidence="1">
    <location>
        <position position="459"/>
    </location>
    <ligand>
        <name>K(+)</name>
        <dbReference type="ChEBI" id="CHEBI:29103"/>
        <label>2</label>
    </ligand>
</feature>
<feature type="site" description="Seems to be a necessary countercharge to the potassium cations" evidence="1">
    <location>
        <position position="247"/>
    </location>
</feature>
<feature type="modified residue" description="Cysteine sulfenic acid (-SOH)" evidence="1">
    <location>
        <position position="285"/>
    </location>
</feature>
<reference key="1">
    <citation type="submission" date="2008-02" db="EMBL/GenBank/DDBJ databases">
        <title>Complete sequence of chromosome 2 of Burkholderia cenocepacia MC0-3.</title>
        <authorList>
            <person name="Copeland A."/>
            <person name="Lucas S."/>
            <person name="Lapidus A."/>
            <person name="Barry K."/>
            <person name="Bruce D."/>
            <person name="Goodwin L."/>
            <person name="Glavina del Rio T."/>
            <person name="Dalin E."/>
            <person name="Tice H."/>
            <person name="Pitluck S."/>
            <person name="Chain P."/>
            <person name="Malfatti S."/>
            <person name="Shin M."/>
            <person name="Vergez L."/>
            <person name="Schmutz J."/>
            <person name="Larimer F."/>
            <person name="Land M."/>
            <person name="Hauser L."/>
            <person name="Kyrpides N."/>
            <person name="Mikhailova N."/>
            <person name="Tiedje J."/>
            <person name="Richardson P."/>
        </authorList>
    </citation>
    <scope>NUCLEOTIDE SEQUENCE [LARGE SCALE GENOMIC DNA]</scope>
    <source>
        <strain>MC0-3</strain>
    </source>
</reference>
<evidence type="ECO:0000255" key="1">
    <source>
        <dbReference type="HAMAP-Rule" id="MF_00804"/>
    </source>
</evidence>
<comment type="function">
    <text evidence="1">Involved in the biosynthesis of the osmoprotectant glycine betaine. Catalyzes the irreversible oxidation of betaine aldehyde to the corresponding acid.</text>
</comment>
<comment type="catalytic activity">
    <reaction evidence="1">
        <text>betaine aldehyde + NAD(+) + H2O = glycine betaine + NADH + 2 H(+)</text>
        <dbReference type="Rhea" id="RHEA:15305"/>
        <dbReference type="ChEBI" id="CHEBI:15377"/>
        <dbReference type="ChEBI" id="CHEBI:15378"/>
        <dbReference type="ChEBI" id="CHEBI:15710"/>
        <dbReference type="ChEBI" id="CHEBI:17750"/>
        <dbReference type="ChEBI" id="CHEBI:57540"/>
        <dbReference type="ChEBI" id="CHEBI:57945"/>
        <dbReference type="EC" id="1.2.1.8"/>
    </reaction>
    <physiologicalReaction direction="left-to-right" evidence="1">
        <dbReference type="Rhea" id="RHEA:15306"/>
    </physiologicalReaction>
</comment>
<comment type="cofactor">
    <cofactor evidence="1">
        <name>K(+)</name>
        <dbReference type="ChEBI" id="CHEBI:29103"/>
    </cofactor>
    <text evidence="1">Binds 2 potassium ions per subunit.</text>
</comment>
<comment type="pathway">
    <text evidence="1">Amine and polyamine biosynthesis; betaine biosynthesis via choline pathway; betaine from betaine aldehyde: step 1/1.</text>
</comment>
<comment type="subunit">
    <text evidence="1">Dimer of dimers.</text>
</comment>
<comment type="similarity">
    <text evidence="1">Belongs to the aldehyde dehydrogenase family.</text>
</comment>
<sequence>MSVYGLQRLYIGGGYVDATSGKTFDTFDPATGELLAQVQQASAADVDRAVASAQEGQREWATMTAMQRSRILRRAVDLLRERNDELAAIETRDTGKPIGETLAVDIVTGADVIEYYAGLATAIEGLQVPLRAESFVYTRREPLGVCAGIGAWNYPIQIACWKTAPALAAGNAMVFKPSEVTPLTALKLAEIYTEAGVPAGVFNVVQGDGSVGALLTGHPDIAKVSFTGGVETGKKVMSLAGASSLKEVTMELGGKSPLIVFDDADLDRAADIAVTANFFSSGQVCTNGTRVFVHRSIKDAFTQKVLERVKRIRVGKPTDADTNFGPLVSAAQLDKVLGFIESGKAEGAKLLAGGTRLTDGHFGSGQYVAPTVFGDCRDDMKIVREEIFGPVMSILEFESEDEVIARANDTHYGLAAGVVTENLSRAHRTIHRLEAGICWINTWGESPAEMPVGGYKQSGVGRENGITTLEHYTRIKSVQVELGRYNPVF</sequence>
<name>BETB_BURO0</name>
<organism>
    <name type="scientific">Burkholderia orbicola (strain MC0-3)</name>
    <dbReference type="NCBI Taxonomy" id="406425"/>
    <lineage>
        <taxon>Bacteria</taxon>
        <taxon>Pseudomonadati</taxon>
        <taxon>Pseudomonadota</taxon>
        <taxon>Betaproteobacteria</taxon>
        <taxon>Burkholderiales</taxon>
        <taxon>Burkholderiaceae</taxon>
        <taxon>Burkholderia</taxon>
        <taxon>Burkholderia cepacia complex</taxon>
        <taxon>Burkholderia orbicola</taxon>
    </lineage>
</organism>
<proteinExistence type="inferred from homology"/>
<dbReference type="EC" id="1.2.1.8" evidence="1"/>
<dbReference type="EMBL" id="CP000959">
    <property type="protein sequence ID" value="ACA94312.1"/>
    <property type="molecule type" value="Genomic_DNA"/>
</dbReference>
<dbReference type="RefSeq" id="WP_012339518.1">
    <property type="nucleotide sequence ID" value="NC_010515.1"/>
</dbReference>
<dbReference type="SMR" id="B1K708"/>
<dbReference type="GeneID" id="83051871"/>
<dbReference type="KEGG" id="bcm:Bcenmc03_5183"/>
<dbReference type="HOGENOM" id="CLU_005391_1_0_4"/>
<dbReference type="UniPathway" id="UPA00529">
    <property type="reaction ID" value="UER00386"/>
</dbReference>
<dbReference type="Proteomes" id="UP000002169">
    <property type="component" value="Chromosome 2"/>
</dbReference>
<dbReference type="GO" id="GO:0008802">
    <property type="term" value="F:betaine-aldehyde dehydrogenase (NAD+) activity"/>
    <property type="evidence" value="ECO:0007669"/>
    <property type="project" value="UniProtKB-UniRule"/>
</dbReference>
<dbReference type="GO" id="GO:0046872">
    <property type="term" value="F:metal ion binding"/>
    <property type="evidence" value="ECO:0007669"/>
    <property type="project" value="UniProtKB-KW"/>
</dbReference>
<dbReference type="GO" id="GO:0019285">
    <property type="term" value="P:glycine betaine biosynthetic process from choline"/>
    <property type="evidence" value="ECO:0007669"/>
    <property type="project" value="UniProtKB-UniRule"/>
</dbReference>
<dbReference type="CDD" id="cd07090">
    <property type="entry name" value="ALDH_F9_TMBADH"/>
    <property type="match status" value="1"/>
</dbReference>
<dbReference type="FunFam" id="3.40.309.10:FF:000014">
    <property type="entry name" value="NAD/NADP-dependent betaine aldehyde dehydrogenase"/>
    <property type="match status" value="1"/>
</dbReference>
<dbReference type="FunFam" id="3.40.605.10:FF:000007">
    <property type="entry name" value="NAD/NADP-dependent betaine aldehyde dehydrogenase"/>
    <property type="match status" value="1"/>
</dbReference>
<dbReference type="Gene3D" id="3.40.605.10">
    <property type="entry name" value="Aldehyde Dehydrogenase, Chain A, domain 1"/>
    <property type="match status" value="1"/>
</dbReference>
<dbReference type="Gene3D" id="3.40.309.10">
    <property type="entry name" value="Aldehyde Dehydrogenase, Chain A, domain 2"/>
    <property type="match status" value="1"/>
</dbReference>
<dbReference type="HAMAP" id="MF_00804">
    <property type="entry name" value="BADH"/>
    <property type="match status" value="1"/>
</dbReference>
<dbReference type="InterPro" id="IPR016161">
    <property type="entry name" value="Ald_DH/histidinol_DH"/>
</dbReference>
<dbReference type="InterPro" id="IPR016163">
    <property type="entry name" value="Ald_DH_C"/>
</dbReference>
<dbReference type="InterPro" id="IPR016160">
    <property type="entry name" value="Ald_DH_CS_CYS"/>
</dbReference>
<dbReference type="InterPro" id="IPR029510">
    <property type="entry name" value="Ald_DH_CS_GLU"/>
</dbReference>
<dbReference type="InterPro" id="IPR016162">
    <property type="entry name" value="Ald_DH_N"/>
</dbReference>
<dbReference type="InterPro" id="IPR015590">
    <property type="entry name" value="Aldehyde_DH_dom"/>
</dbReference>
<dbReference type="InterPro" id="IPR011264">
    <property type="entry name" value="BADH"/>
</dbReference>
<dbReference type="NCBIfam" id="TIGR01804">
    <property type="entry name" value="BADH"/>
    <property type="match status" value="1"/>
</dbReference>
<dbReference type="NCBIfam" id="NF009725">
    <property type="entry name" value="PRK13252.1"/>
    <property type="match status" value="1"/>
</dbReference>
<dbReference type="PANTHER" id="PTHR11699">
    <property type="entry name" value="ALDEHYDE DEHYDROGENASE-RELATED"/>
    <property type="match status" value="1"/>
</dbReference>
<dbReference type="Pfam" id="PF00171">
    <property type="entry name" value="Aldedh"/>
    <property type="match status" value="1"/>
</dbReference>
<dbReference type="SUPFAM" id="SSF53720">
    <property type="entry name" value="ALDH-like"/>
    <property type="match status" value="1"/>
</dbReference>
<dbReference type="PROSITE" id="PS00070">
    <property type="entry name" value="ALDEHYDE_DEHYDR_CYS"/>
    <property type="match status" value="1"/>
</dbReference>
<dbReference type="PROSITE" id="PS00687">
    <property type="entry name" value="ALDEHYDE_DEHYDR_GLU"/>
    <property type="match status" value="1"/>
</dbReference>
<accession>B1K708</accession>
<protein>
    <recommendedName>
        <fullName evidence="1">Betaine aldehyde dehydrogenase</fullName>
        <shortName evidence="1">BADH</shortName>
        <ecNumber evidence="1">1.2.1.8</ecNumber>
    </recommendedName>
</protein>
<keyword id="KW-0479">Metal-binding</keyword>
<keyword id="KW-0520">NAD</keyword>
<keyword id="KW-0521">NADP</keyword>
<keyword id="KW-0558">Oxidation</keyword>
<keyword id="KW-0560">Oxidoreductase</keyword>
<keyword id="KW-0630">Potassium</keyword>